<sequence>MRDYDEAIAFLGEWGPFQRLIFFLLSASIIPNGFNGMSVVFLAGTPEHRCRVPDAANLSSAWRNNSVPLRLRDGREVLHSCRRYRLATIANFSALGLEPGRDVDLGQLEQESCLDGWEFSQDVYWSTVVTEWNLVCEDNWKVPLTTSLFFVGVLLGSFVSGQLSDRFGRKNVLFATMAVQTGFSFLQIFSISWEMFTVLFLIVGMGQISNYVVAFILGTEILGKSVRIIFSTLGVCTFFAVGYMLLPLFAYFIRDWRMLLLALTVPGVLCVPLWWFIPESPRWLISQRRFREAEDIIQKAAKMNNIAVPAVIFDSVEELNPLKQQKAFILDLFRTWNIAIMTIMSLLLWMLTSVGYFALSLDTPNLHGDAYLNCFLSALIEIPAYITAWLLLRTLPRRYIIAAVLFWGGGVLLFIQLVPVDYYFLSIGLVMLGKFGITSAFSMLYVFTAELYPTMVRNMAVGVTSMASRVGSIIAPYFVYLGAYNRMLPYIVMGSLTVLIGILTLFFPESLGMTLPETLEQMQKVKWFRSGKKTRDSMETEENPKVLITAF</sequence>
<keyword id="KW-0067">ATP-binding</keyword>
<keyword id="KW-1003">Cell membrane</keyword>
<keyword id="KW-0325">Glycoprotein</keyword>
<keyword id="KW-0406">Ion transport</keyword>
<keyword id="KW-0472">Membrane</keyword>
<keyword id="KW-0496">Mitochondrion</keyword>
<keyword id="KW-0547">Nucleotide-binding</keyword>
<keyword id="KW-1185">Reference proteome</keyword>
<keyword id="KW-0915">Sodium</keyword>
<keyword id="KW-0739">Sodium transport</keyword>
<keyword id="KW-0769">Symport</keyword>
<keyword id="KW-0812">Transmembrane</keyword>
<keyword id="KW-1133">Transmembrane helix</keyword>
<keyword id="KW-0813">Transport</keyword>
<proteinExistence type="inferred from homology"/>
<protein>
    <recommendedName>
        <fullName evidence="1">Solute carrier family 22 member 4</fullName>
    </recommendedName>
    <alternativeName>
        <fullName evidence="1">Organic cation/carnitine transporter 1</fullName>
    </alternativeName>
</protein>
<name>S22A4_PAPAN</name>
<comment type="function">
    <text evidence="1 2">Transporter that mediates the transport of endogenous and microbial zwitterions and organic cations. Functions as a Na(+)-dependent and pH-dependent high affinity microbial symporter of potent food-derived antioxidant ergothioeine (By similarity). Transports one sodium ion with one ergothioeine molecule (By similarity). Involved in the absorption of ergothioneine from the luminal/apical side of the small intestine and renal tubular cells, and into non-parenchymal liver cells, thereby contributing to maintain steady-state ergothioneine level in the body. Also mediates the bidirectional transport of acetycholine, although the exact transport mechanism has not been fully identified yet. Most likely exports anti-inflammatory acetylcholine in non-neuronal tissues, thereby contributing to the non-neuronal cholinergic system. Displays a general physiological role linked to better survival by controlling inflammation and oxidative stress, which may be related to ergothioneine and acetycholine transports. May also function as a low-affinity Na(+)-dependent transporter of L-carnitine through the mitochondrial membrane, thereby maintaining intracellular carnitine homeostasis. May contribute to regulate the transport of cationic compounds in testis across the blood-testis-barrier (By similarity).</text>
</comment>
<comment type="catalytic activity">
    <reaction evidence="1">
        <text>ergothioneine(out) + Na(+)(out) = ergothioneine(in) + Na(+)(in)</text>
        <dbReference type="Rhea" id="RHEA:75843"/>
        <dbReference type="ChEBI" id="CHEBI:29101"/>
        <dbReference type="ChEBI" id="CHEBI:134344"/>
    </reaction>
</comment>
<comment type="catalytic activity">
    <reaction evidence="1">
        <text>acetylcholine(in) = acetylcholine(out)</text>
        <dbReference type="Rhea" id="RHEA:74663"/>
        <dbReference type="ChEBI" id="CHEBI:15355"/>
    </reaction>
    <physiologicalReaction direction="left-to-right" evidence="1">
        <dbReference type="Rhea" id="RHEA:74664"/>
    </physiologicalReaction>
    <physiologicalReaction direction="right-to-left" evidence="1">
        <dbReference type="Rhea" id="RHEA:74665"/>
    </physiologicalReaction>
</comment>
<comment type="catalytic activity">
    <reaction evidence="1">
        <text>(R)-carnitine(out) + Na(+)(out) = (R)-carnitine(in) + Na(+)(in)</text>
        <dbReference type="Rhea" id="RHEA:72091"/>
        <dbReference type="ChEBI" id="CHEBI:16347"/>
        <dbReference type="ChEBI" id="CHEBI:29101"/>
    </reaction>
</comment>
<comment type="catalytic activity">
    <reaction evidence="1">
        <text>glycine betaine(out) + Na(+)(out) = glycine betaine(in) + Na(+)(in)</text>
        <dbReference type="Rhea" id="RHEA:72115"/>
        <dbReference type="ChEBI" id="CHEBI:17750"/>
        <dbReference type="ChEBI" id="CHEBI:29101"/>
    </reaction>
    <physiologicalReaction direction="left-to-right" evidence="1">
        <dbReference type="Rhea" id="RHEA:72116"/>
    </physiologicalReaction>
</comment>
<comment type="activity regulation">
    <text evidence="1">Allosterically activated by intracellular ATP.</text>
</comment>
<comment type="subunit">
    <text evidence="3">Interacts with PDZK1.</text>
</comment>
<comment type="subcellular location">
    <subcellularLocation>
        <location evidence="1">Apical cell membrane</location>
        <topology evidence="5">Multi-pass membrane protein</topology>
    </subcellularLocation>
    <subcellularLocation>
        <location evidence="1">Basal cell membrane</location>
        <topology evidence="5">Multi-pass membrane protein</topology>
    </subcellularLocation>
    <subcellularLocation>
        <location evidence="1">Mitochondrion membrane</location>
        <topology evidence="5">Multi-pass membrane protein</topology>
    </subcellularLocation>
</comment>
<comment type="similarity">
    <text evidence="5">Belongs to the major facilitator (TC 2.A.1) superfamily. Organic cation transporter (TC 2.A.1.19) family.</text>
</comment>
<organism>
    <name type="scientific">Papio anubis</name>
    <name type="common">Olive baboon</name>
    <dbReference type="NCBI Taxonomy" id="9555"/>
    <lineage>
        <taxon>Eukaryota</taxon>
        <taxon>Metazoa</taxon>
        <taxon>Chordata</taxon>
        <taxon>Craniata</taxon>
        <taxon>Vertebrata</taxon>
        <taxon>Euteleostomi</taxon>
        <taxon>Mammalia</taxon>
        <taxon>Eutheria</taxon>
        <taxon>Euarchontoglires</taxon>
        <taxon>Primates</taxon>
        <taxon>Haplorrhini</taxon>
        <taxon>Catarrhini</taxon>
        <taxon>Cercopithecidae</taxon>
        <taxon>Cercopithecinae</taxon>
        <taxon>Papio</taxon>
    </lineage>
</organism>
<accession>A9CB25</accession>
<dbReference type="EMBL" id="DP000485">
    <property type="protein sequence ID" value="ABW96796.1"/>
    <property type="molecule type" value="Genomic_DNA"/>
</dbReference>
<dbReference type="RefSeq" id="NP_001162226.1">
    <property type="nucleotide sequence ID" value="NM_001168755.1"/>
</dbReference>
<dbReference type="SMR" id="A9CB25"/>
<dbReference type="STRING" id="9555.ENSPANP00000004851"/>
<dbReference type="GlyCosmos" id="A9CB25">
    <property type="glycosylation" value="3 sites, No reported glycans"/>
</dbReference>
<dbReference type="Ensembl" id="ENSPANT00000019446.3">
    <property type="protein sequence ID" value="ENSPANP00000004851.1"/>
    <property type="gene ID" value="ENSPANG00000024866.3"/>
</dbReference>
<dbReference type="GeneID" id="100137217"/>
<dbReference type="KEGG" id="panu:100137217"/>
<dbReference type="CTD" id="6583"/>
<dbReference type="eggNOG" id="KOG0255">
    <property type="taxonomic scope" value="Eukaryota"/>
</dbReference>
<dbReference type="GeneTree" id="ENSGT00940000154155"/>
<dbReference type="HOGENOM" id="CLU_001265_33_4_1"/>
<dbReference type="OMA" id="DAYFNCF"/>
<dbReference type="OrthoDB" id="10191at314294"/>
<dbReference type="Proteomes" id="UP000028761">
    <property type="component" value="Chromosome 5"/>
</dbReference>
<dbReference type="Bgee" id="ENSPANG00000024866">
    <property type="expression patterns" value="Expressed in metanephros cortex and 45 other cell types or tissues"/>
</dbReference>
<dbReference type="GO" id="GO:0016324">
    <property type="term" value="C:apical plasma membrane"/>
    <property type="evidence" value="ECO:0000250"/>
    <property type="project" value="UniProtKB"/>
</dbReference>
<dbReference type="GO" id="GO:0009925">
    <property type="term" value="C:basal plasma membrane"/>
    <property type="evidence" value="ECO:0000250"/>
    <property type="project" value="UniProtKB"/>
</dbReference>
<dbReference type="GO" id="GO:0031966">
    <property type="term" value="C:mitochondrial membrane"/>
    <property type="evidence" value="ECO:0000250"/>
    <property type="project" value="UniProtKB"/>
</dbReference>
<dbReference type="GO" id="GO:0005277">
    <property type="term" value="F:acetylcholine transmembrane transporter activity"/>
    <property type="evidence" value="ECO:0000250"/>
    <property type="project" value="UniProtKB"/>
</dbReference>
<dbReference type="GO" id="GO:0015171">
    <property type="term" value="F:amino acid transmembrane transporter activity"/>
    <property type="evidence" value="ECO:0007669"/>
    <property type="project" value="Ensembl"/>
</dbReference>
<dbReference type="GO" id="GO:0015199">
    <property type="term" value="F:amino-acid betaine transmembrane transporter activity"/>
    <property type="evidence" value="ECO:0000250"/>
    <property type="project" value="UniProtKB"/>
</dbReference>
<dbReference type="GO" id="GO:0005524">
    <property type="term" value="F:ATP binding"/>
    <property type="evidence" value="ECO:0007669"/>
    <property type="project" value="UniProtKB-KW"/>
</dbReference>
<dbReference type="GO" id="GO:0015226">
    <property type="term" value="F:carnitine transmembrane transporter activity"/>
    <property type="evidence" value="ECO:0007669"/>
    <property type="project" value="Ensembl"/>
</dbReference>
<dbReference type="GO" id="GO:0030165">
    <property type="term" value="F:PDZ domain binding"/>
    <property type="evidence" value="ECO:0007669"/>
    <property type="project" value="Ensembl"/>
</dbReference>
<dbReference type="GO" id="GO:0015293">
    <property type="term" value="F:symporter activity"/>
    <property type="evidence" value="ECO:0007669"/>
    <property type="project" value="UniProtKB-KW"/>
</dbReference>
<dbReference type="GO" id="GO:0089718">
    <property type="term" value="P:amino acid import across plasma membrane"/>
    <property type="evidence" value="ECO:0007669"/>
    <property type="project" value="Ensembl"/>
</dbReference>
<dbReference type="GO" id="GO:0009437">
    <property type="term" value="P:carnitine metabolic process"/>
    <property type="evidence" value="ECO:0007669"/>
    <property type="project" value="Ensembl"/>
</dbReference>
<dbReference type="GO" id="GO:0006814">
    <property type="term" value="P:sodium ion transport"/>
    <property type="evidence" value="ECO:0007669"/>
    <property type="project" value="UniProtKB-KW"/>
</dbReference>
<dbReference type="GO" id="GO:0006641">
    <property type="term" value="P:triglyceride metabolic process"/>
    <property type="evidence" value="ECO:0007669"/>
    <property type="project" value="Ensembl"/>
</dbReference>
<dbReference type="GO" id="GO:0042908">
    <property type="term" value="P:xenobiotic transport"/>
    <property type="evidence" value="ECO:0007669"/>
    <property type="project" value="Ensembl"/>
</dbReference>
<dbReference type="CDD" id="cd17376">
    <property type="entry name" value="MFS_SLC22A4_5_OCTN1_2"/>
    <property type="match status" value="1"/>
</dbReference>
<dbReference type="FunFam" id="1.20.1250.20:FF:000070">
    <property type="entry name" value="Solute carrier family 22 member 5"/>
    <property type="match status" value="1"/>
</dbReference>
<dbReference type="Gene3D" id="1.20.1250.20">
    <property type="entry name" value="MFS general substrate transporter like domains"/>
    <property type="match status" value="1"/>
</dbReference>
<dbReference type="InterPro" id="IPR020846">
    <property type="entry name" value="MFS_dom"/>
</dbReference>
<dbReference type="InterPro" id="IPR005828">
    <property type="entry name" value="MFS_sugar_transport-like"/>
</dbReference>
<dbReference type="InterPro" id="IPR036259">
    <property type="entry name" value="MFS_trans_sf"/>
</dbReference>
<dbReference type="InterPro" id="IPR004749">
    <property type="entry name" value="Orgcat_transp/SVOP"/>
</dbReference>
<dbReference type="InterPro" id="IPR045915">
    <property type="entry name" value="S22A4/5"/>
</dbReference>
<dbReference type="InterPro" id="IPR005829">
    <property type="entry name" value="Sugar_transporter_CS"/>
</dbReference>
<dbReference type="NCBIfam" id="TIGR00898">
    <property type="entry name" value="2A0119"/>
    <property type="match status" value="1"/>
</dbReference>
<dbReference type="PANTHER" id="PTHR24064">
    <property type="entry name" value="SOLUTE CARRIER FAMILY 22 MEMBER"/>
    <property type="match status" value="1"/>
</dbReference>
<dbReference type="Pfam" id="PF00083">
    <property type="entry name" value="Sugar_tr"/>
    <property type="match status" value="1"/>
</dbReference>
<dbReference type="SUPFAM" id="SSF103473">
    <property type="entry name" value="MFS general substrate transporter"/>
    <property type="match status" value="1"/>
</dbReference>
<dbReference type="PROSITE" id="PS50850">
    <property type="entry name" value="MFS"/>
    <property type="match status" value="1"/>
</dbReference>
<dbReference type="PROSITE" id="PS00216">
    <property type="entry name" value="SUGAR_TRANSPORT_1"/>
    <property type="match status" value="1"/>
</dbReference>
<gene>
    <name type="primary">SLC22A4</name>
    <name type="synonym">OCTN1</name>
</gene>
<reference key="1">
    <citation type="submission" date="2007-11" db="EMBL/GenBank/DDBJ databases">
        <title>NISC comparative sequencing initiative.</title>
        <authorList>
            <person name="Antonellis A."/>
            <person name="Benjamin B."/>
            <person name="Blakesley R.W."/>
            <person name="Bouffard G.G."/>
            <person name="Brinkley C."/>
            <person name="Brooks S."/>
            <person name="Chu G."/>
            <person name="Chub I."/>
            <person name="Coleman H."/>
            <person name="Fuksenko T."/>
            <person name="Gestole M."/>
            <person name="Gregory M."/>
            <person name="Guan X."/>
            <person name="Gupta J."/>
            <person name="Gurson N."/>
            <person name="Han E."/>
            <person name="Han J."/>
            <person name="Hansen N."/>
            <person name="Hargrove A."/>
            <person name="Hines-Harris K."/>
            <person name="Ho S.-L."/>
            <person name="Hu P."/>
            <person name="Hunter G."/>
            <person name="Hurle B."/>
            <person name="Idol J.R."/>
            <person name="Johnson T."/>
            <person name="Knight E."/>
            <person name="Kwong P."/>
            <person name="Lee-Lin S.-Q."/>
            <person name="Legaspi R."/>
            <person name="Madden M."/>
            <person name="Maduro Q.L."/>
            <person name="Maduro V.B."/>
            <person name="Margulies E.H."/>
            <person name="Masiello C."/>
            <person name="Maskeri B."/>
            <person name="McDowell J."/>
            <person name="Merkulov G."/>
            <person name="Montemayor C."/>
            <person name="Mullikin J.C."/>
            <person name="Park M."/>
            <person name="Prasad A."/>
            <person name="Ramsahoye C."/>
            <person name="Reddix-Dugue N."/>
            <person name="Riebow N."/>
            <person name="Schandler K."/>
            <person name="Schueler M.G."/>
            <person name="Sison C."/>
            <person name="Smith L."/>
            <person name="Stantripop S."/>
            <person name="Thomas J.W."/>
            <person name="Thomas P.J."/>
            <person name="Tsipouri V."/>
            <person name="Young A."/>
            <person name="Green E.D."/>
        </authorList>
    </citation>
    <scope>NUCLEOTIDE SEQUENCE [LARGE SCALE GENOMIC DNA]</scope>
</reference>
<evidence type="ECO:0000250" key="1">
    <source>
        <dbReference type="UniProtKB" id="Q9H015"/>
    </source>
</evidence>
<evidence type="ECO:0000250" key="2">
    <source>
        <dbReference type="UniProtKB" id="Q9R141"/>
    </source>
</evidence>
<evidence type="ECO:0000250" key="3">
    <source>
        <dbReference type="UniProtKB" id="Q9Z306"/>
    </source>
</evidence>
<evidence type="ECO:0000255" key="4"/>
<evidence type="ECO:0000305" key="5"/>
<feature type="chain" id="PRO_0000328859" description="Solute carrier family 22 member 4">
    <location>
        <begin position="1"/>
        <end position="551"/>
    </location>
</feature>
<feature type="topological domain" description="Cytoplasmic" evidence="4">
    <location>
        <begin position="1"/>
        <end position="20"/>
    </location>
</feature>
<feature type="transmembrane region" description="Helical; Name=1" evidence="4">
    <location>
        <begin position="21"/>
        <end position="41"/>
    </location>
</feature>
<feature type="topological domain" description="Extracellular" evidence="4">
    <location>
        <begin position="42"/>
        <end position="141"/>
    </location>
</feature>
<feature type="transmembrane region" description="Helical; Name=2" evidence="4">
    <location>
        <begin position="142"/>
        <end position="162"/>
    </location>
</feature>
<feature type="topological domain" description="Cytoplasmic" evidence="4">
    <location>
        <begin position="163"/>
        <end position="171"/>
    </location>
</feature>
<feature type="transmembrane region" description="Helical; Name=3" evidence="4">
    <location>
        <begin position="172"/>
        <end position="192"/>
    </location>
</feature>
<feature type="topological domain" description="Extracellular" evidence="4">
    <location>
        <begin position="193"/>
        <end position="197"/>
    </location>
</feature>
<feature type="transmembrane region" description="Helical; Name=4" evidence="4">
    <location>
        <begin position="198"/>
        <end position="218"/>
    </location>
</feature>
<feature type="topological domain" description="Cytoplasmic" evidence="4">
    <location>
        <begin position="219"/>
        <end position="232"/>
    </location>
</feature>
<feature type="transmembrane region" description="Helical; Name=5" evidence="4">
    <location>
        <begin position="233"/>
        <end position="253"/>
    </location>
</feature>
<feature type="topological domain" description="Extracellular" evidence="4">
    <location>
        <begin position="254"/>
        <end position="257"/>
    </location>
</feature>
<feature type="transmembrane region" description="Helical; Name=6" evidence="4">
    <location>
        <begin position="258"/>
        <end position="278"/>
    </location>
</feature>
<feature type="topological domain" description="Cytoplasmic" evidence="4">
    <location>
        <begin position="279"/>
        <end position="337"/>
    </location>
</feature>
<feature type="transmembrane region" description="Helical; Name=7" evidence="4">
    <location>
        <begin position="338"/>
        <end position="358"/>
    </location>
</feature>
<feature type="topological domain" description="Extracellular" evidence="4">
    <location>
        <begin position="359"/>
        <end position="371"/>
    </location>
</feature>
<feature type="transmembrane region" description="Helical; Name=8" evidence="4">
    <location>
        <begin position="372"/>
        <end position="392"/>
    </location>
</feature>
<feature type="topological domain" description="Cytoplasmic" evidence="4">
    <location>
        <begin position="393"/>
        <end position="399"/>
    </location>
</feature>
<feature type="transmembrane region" description="Helical; Name=9" evidence="4">
    <location>
        <begin position="400"/>
        <end position="420"/>
    </location>
</feature>
<feature type="topological domain" description="Extracellular" evidence="4">
    <location>
        <begin position="421"/>
        <end position="426"/>
    </location>
</feature>
<feature type="transmembrane region" description="Helical; Name=10" evidence="4">
    <location>
        <begin position="427"/>
        <end position="447"/>
    </location>
</feature>
<feature type="topological domain" description="Cytoplasmic" evidence="4">
    <location>
        <begin position="448"/>
        <end position="460"/>
    </location>
</feature>
<feature type="transmembrane region" description="Helical; Name=11" evidence="4">
    <location>
        <begin position="461"/>
        <end position="481"/>
    </location>
</feature>
<feature type="topological domain" description="Extracellular" evidence="4">
    <location>
        <begin position="482"/>
        <end position="486"/>
    </location>
</feature>
<feature type="transmembrane region" description="Helical; Name=12" evidence="4">
    <location>
        <begin position="487"/>
        <end position="507"/>
    </location>
</feature>
<feature type="topological domain" description="Cytoplasmic" evidence="4">
    <location>
        <begin position="508"/>
        <end position="551"/>
    </location>
</feature>
<feature type="binding site" evidence="4">
    <location>
        <begin position="218"/>
        <end position="225"/>
    </location>
    <ligand>
        <name>ATP</name>
        <dbReference type="ChEBI" id="CHEBI:30616"/>
    </ligand>
</feature>
<feature type="glycosylation site" description="N-linked (GlcNAc...) asparagine" evidence="4">
    <location>
        <position position="57"/>
    </location>
</feature>
<feature type="glycosylation site" description="N-linked (GlcNAc...) asparagine" evidence="4">
    <location>
        <position position="64"/>
    </location>
</feature>
<feature type="glycosylation site" description="N-linked (GlcNAc...) asparagine" evidence="4">
    <location>
        <position position="91"/>
    </location>
</feature>